<organism>
    <name type="scientific">Escherichia coli O157:H7</name>
    <dbReference type="NCBI Taxonomy" id="83334"/>
    <lineage>
        <taxon>Bacteria</taxon>
        <taxon>Pseudomonadati</taxon>
        <taxon>Pseudomonadota</taxon>
        <taxon>Gammaproteobacteria</taxon>
        <taxon>Enterobacterales</taxon>
        <taxon>Enterobacteriaceae</taxon>
        <taxon>Escherichia</taxon>
    </lineage>
</organism>
<sequence>MINVLLVDDHELVRAGIRRILEDIKGIKVVGEASCGEDAVKWCRANAVDVVLMDMSMPGIGGLEATRKIARSTADVKIIMLTVHTENPLPAKVMQAGAAGYLSKGAAPQEVVSAIRSVYSGQRYIASDIAQQMALSQIEPEKTESPFASLSERELQIMLMITKGQKVNEISEQLNLSPKTVNSYRYRMFSKLNIHGDVELTHLAIRHGLCNAETLSSQ</sequence>
<comment type="function">
    <text evidence="1">Member of the two-component regulatory system UvrY/BarA involved in the regulation of carbon metabolism via the CsrA/CsrB regulatory system. UvrY activates the transcription of the untranslated csrB RNA and of barA, in an autoregulatory loop. Mediates the effects of CsrA on csrB RNA by BarA-dependent and BarA-independent mechanisms (By similarity).</text>
</comment>
<comment type="subcellular location">
    <subcellularLocation>
        <location evidence="4">Cytoplasm</location>
    </subcellularLocation>
</comment>
<comment type="PTM">
    <text evidence="1">Phosphorylated and activated by BarA.</text>
</comment>
<dbReference type="EMBL" id="AE005174">
    <property type="protein sequence ID" value="AAG56929.1"/>
    <property type="molecule type" value="Genomic_DNA"/>
</dbReference>
<dbReference type="EMBL" id="BA000007">
    <property type="protein sequence ID" value="BAB36075.1"/>
    <property type="molecule type" value="Genomic_DNA"/>
</dbReference>
<dbReference type="PIR" id="D90960">
    <property type="entry name" value="D90960"/>
</dbReference>
<dbReference type="PIR" id="E85808">
    <property type="entry name" value="E85808"/>
</dbReference>
<dbReference type="RefSeq" id="NP_310679.1">
    <property type="nucleotide sequence ID" value="NC_002695.1"/>
</dbReference>
<dbReference type="RefSeq" id="WP_000611328.1">
    <property type="nucleotide sequence ID" value="NZ_VOAI01000028.1"/>
</dbReference>
<dbReference type="SMR" id="P66798"/>
<dbReference type="STRING" id="155864.Z3002"/>
<dbReference type="GeneID" id="75172035"/>
<dbReference type="GeneID" id="912605"/>
<dbReference type="KEGG" id="ece:Z3002"/>
<dbReference type="KEGG" id="ecs:ECs_2652"/>
<dbReference type="PATRIC" id="fig|386585.9.peg.2777"/>
<dbReference type="eggNOG" id="COG2197">
    <property type="taxonomic scope" value="Bacteria"/>
</dbReference>
<dbReference type="HOGENOM" id="CLU_000445_90_1_6"/>
<dbReference type="OMA" id="NVLRKTQ"/>
<dbReference type="Proteomes" id="UP000000558">
    <property type="component" value="Chromosome"/>
</dbReference>
<dbReference type="Proteomes" id="UP000002519">
    <property type="component" value="Chromosome"/>
</dbReference>
<dbReference type="GO" id="GO:0005737">
    <property type="term" value="C:cytoplasm"/>
    <property type="evidence" value="ECO:0007669"/>
    <property type="project" value="UniProtKB-SubCell"/>
</dbReference>
<dbReference type="GO" id="GO:0003677">
    <property type="term" value="F:DNA binding"/>
    <property type="evidence" value="ECO:0007669"/>
    <property type="project" value="UniProtKB-KW"/>
</dbReference>
<dbReference type="GO" id="GO:0000160">
    <property type="term" value="P:phosphorelay signal transduction system"/>
    <property type="evidence" value="ECO:0007669"/>
    <property type="project" value="UniProtKB-KW"/>
</dbReference>
<dbReference type="GO" id="GO:0006355">
    <property type="term" value="P:regulation of DNA-templated transcription"/>
    <property type="evidence" value="ECO:0007669"/>
    <property type="project" value="InterPro"/>
</dbReference>
<dbReference type="CDD" id="cd06170">
    <property type="entry name" value="LuxR_C_like"/>
    <property type="match status" value="1"/>
</dbReference>
<dbReference type="CDD" id="cd17535">
    <property type="entry name" value="REC_NarL-like"/>
    <property type="match status" value="1"/>
</dbReference>
<dbReference type="FunFam" id="3.40.50.2300:FF:000015">
    <property type="entry name" value="Two-component response regulator UvrY"/>
    <property type="match status" value="1"/>
</dbReference>
<dbReference type="Gene3D" id="3.40.50.2300">
    <property type="match status" value="1"/>
</dbReference>
<dbReference type="InterPro" id="IPR011006">
    <property type="entry name" value="CheY-like_superfamily"/>
</dbReference>
<dbReference type="InterPro" id="IPR016032">
    <property type="entry name" value="Sig_transdc_resp-reg_C-effctor"/>
</dbReference>
<dbReference type="InterPro" id="IPR001789">
    <property type="entry name" value="Sig_transdc_resp-reg_receiver"/>
</dbReference>
<dbReference type="InterPro" id="IPR000792">
    <property type="entry name" value="Tscrpt_reg_LuxR_C"/>
</dbReference>
<dbReference type="InterPro" id="IPR039420">
    <property type="entry name" value="WalR-like"/>
</dbReference>
<dbReference type="NCBIfam" id="NF007018">
    <property type="entry name" value="PRK09483.1"/>
    <property type="match status" value="1"/>
</dbReference>
<dbReference type="PANTHER" id="PTHR43214:SF3">
    <property type="entry name" value="RESPONSE REGULATOR UVRY"/>
    <property type="match status" value="1"/>
</dbReference>
<dbReference type="PANTHER" id="PTHR43214">
    <property type="entry name" value="TWO-COMPONENT RESPONSE REGULATOR"/>
    <property type="match status" value="1"/>
</dbReference>
<dbReference type="Pfam" id="PF00196">
    <property type="entry name" value="GerE"/>
    <property type="match status" value="1"/>
</dbReference>
<dbReference type="Pfam" id="PF00072">
    <property type="entry name" value="Response_reg"/>
    <property type="match status" value="1"/>
</dbReference>
<dbReference type="PRINTS" id="PR00038">
    <property type="entry name" value="HTHLUXR"/>
</dbReference>
<dbReference type="SMART" id="SM00421">
    <property type="entry name" value="HTH_LUXR"/>
    <property type="match status" value="1"/>
</dbReference>
<dbReference type="SMART" id="SM00448">
    <property type="entry name" value="REC"/>
    <property type="match status" value="1"/>
</dbReference>
<dbReference type="SUPFAM" id="SSF46894">
    <property type="entry name" value="C-terminal effector domain of the bipartite response regulators"/>
    <property type="match status" value="1"/>
</dbReference>
<dbReference type="SUPFAM" id="SSF52172">
    <property type="entry name" value="CheY-like"/>
    <property type="match status" value="1"/>
</dbReference>
<dbReference type="PROSITE" id="PS00622">
    <property type="entry name" value="HTH_LUXR_1"/>
    <property type="match status" value="1"/>
</dbReference>
<dbReference type="PROSITE" id="PS50043">
    <property type="entry name" value="HTH_LUXR_2"/>
    <property type="match status" value="1"/>
</dbReference>
<dbReference type="PROSITE" id="PS50110">
    <property type="entry name" value="RESPONSE_REGULATORY"/>
    <property type="match status" value="1"/>
</dbReference>
<accession>P66798</accession>
<accession>Q8XBD4</accession>
<proteinExistence type="inferred from homology"/>
<gene>
    <name type="primary">uvrY</name>
    <name type="ordered locus">Z3002</name>
    <name type="ordered locus">ECs2652</name>
</gene>
<feature type="chain" id="PRO_0000081293" description="Response regulator UvrY">
    <location>
        <begin position="1"/>
        <end position="218"/>
    </location>
</feature>
<feature type="domain" description="Response regulatory" evidence="2">
    <location>
        <begin position="3"/>
        <end position="119"/>
    </location>
</feature>
<feature type="domain" description="HTH luxR-type" evidence="3">
    <location>
        <begin position="143"/>
        <end position="208"/>
    </location>
</feature>
<feature type="DNA-binding region" description="H-T-H motif" evidence="3">
    <location>
        <begin position="167"/>
        <end position="186"/>
    </location>
</feature>
<feature type="modified residue" description="4-aspartylphosphate" evidence="2">
    <location>
        <position position="54"/>
    </location>
</feature>
<name>UVRY_ECO57</name>
<evidence type="ECO:0000250" key="1"/>
<evidence type="ECO:0000255" key="2">
    <source>
        <dbReference type="PROSITE-ProRule" id="PRU00169"/>
    </source>
</evidence>
<evidence type="ECO:0000255" key="3">
    <source>
        <dbReference type="PROSITE-ProRule" id="PRU00411"/>
    </source>
</evidence>
<evidence type="ECO:0000305" key="4"/>
<keyword id="KW-0963">Cytoplasm</keyword>
<keyword id="KW-0238">DNA-binding</keyword>
<keyword id="KW-0597">Phosphoprotein</keyword>
<keyword id="KW-1185">Reference proteome</keyword>
<keyword id="KW-0804">Transcription</keyword>
<keyword id="KW-0805">Transcription regulation</keyword>
<keyword id="KW-0902">Two-component regulatory system</keyword>
<protein>
    <recommendedName>
        <fullName>Response regulator UvrY</fullName>
    </recommendedName>
</protein>
<reference key="1">
    <citation type="journal article" date="2001" name="Nature">
        <title>Genome sequence of enterohaemorrhagic Escherichia coli O157:H7.</title>
        <authorList>
            <person name="Perna N.T."/>
            <person name="Plunkett G. III"/>
            <person name="Burland V."/>
            <person name="Mau B."/>
            <person name="Glasner J.D."/>
            <person name="Rose D.J."/>
            <person name="Mayhew G.F."/>
            <person name="Evans P.S."/>
            <person name="Gregor J."/>
            <person name="Kirkpatrick H.A."/>
            <person name="Posfai G."/>
            <person name="Hackett J."/>
            <person name="Klink S."/>
            <person name="Boutin A."/>
            <person name="Shao Y."/>
            <person name="Miller L."/>
            <person name="Grotbeck E.J."/>
            <person name="Davis N.W."/>
            <person name="Lim A."/>
            <person name="Dimalanta E.T."/>
            <person name="Potamousis K."/>
            <person name="Apodaca J."/>
            <person name="Anantharaman T.S."/>
            <person name="Lin J."/>
            <person name="Yen G."/>
            <person name="Schwartz D.C."/>
            <person name="Welch R.A."/>
            <person name="Blattner F.R."/>
        </authorList>
    </citation>
    <scope>NUCLEOTIDE SEQUENCE [LARGE SCALE GENOMIC DNA]</scope>
    <source>
        <strain>O157:H7 / EDL933 / ATCC 700927 / EHEC</strain>
    </source>
</reference>
<reference key="2">
    <citation type="journal article" date="2001" name="DNA Res.">
        <title>Complete genome sequence of enterohemorrhagic Escherichia coli O157:H7 and genomic comparison with a laboratory strain K-12.</title>
        <authorList>
            <person name="Hayashi T."/>
            <person name="Makino K."/>
            <person name="Ohnishi M."/>
            <person name="Kurokawa K."/>
            <person name="Ishii K."/>
            <person name="Yokoyama K."/>
            <person name="Han C.-G."/>
            <person name="Ohtsubo E."/>
            <person name="Nakayama K."/>
            <person name="Murata T."/>
            <person name="Tanaka M."/>
            <person name="Tobe T."/>
            <person name="Iida T."/>
            <person name="Takami H."/>
            <person name="Honda T."/>
            <person name="Sasakawa C."/>
            <person name="Ogasawara N."/>
            <person name="Yasunaga T."/>
            <person name="Kuhara S."/>
            <person name="Shiba T."/>
            <person name="Hattori M."/>
            <person name="Shinagawa H."/>
        </authorList>
    </citation>
    <scope>NUCLEOTIDE SEQUENCE [LARGE SCALE GENOMIC DNA]</scope>
    <source>
        <strain>O157:H7 / Sakai / RIMD 0509952 / EHEC</strain>
    </source>
</reference>